<sequence>MAKEDVIEIEGKVVETMPNAMFTVELENGHQILATVSGKIRKNYIRILVGDRVTVEMSPYDLTRGRITYRFK</sequence>
<dbReference type="EMBL" id="AE004092">
    <property type="protein sequence ID" value="AAK33204.1"/>
    <property type="molecule type" value="Genomic_DNA"/>
</dbReference>
<dbReference type="EMBL" id="CP000017">
    <property type="protein sequence ID" value="AAZ50685.1"/>
    <property type="molecule type" value="Genomic_DNA"/>
</dbReference>
<dbReference type="RefSeq" id="NP_268482.1">
    <property type="nucleotide sequence ID" value="NC_002737.2"/>
</dbReference>
<dbReference type="SMR" id="P65123"/>
<dbReference type="PaxDb" id="1314-HKU360_00099"/>
<dbReference type="KEGG" id="spy:SPy_0075"/>
<dbReference type="KEGG" id="spz:M5005_Spy0066"/>
<dbReference type="PATRIC" id="fig|160490.10.peg.66"/>
<dbReference type="HOGENOM" id="CLU_151267_1_0_9"/>
<dbReference type="OMA" id="EGHQCLC"/>
<dbReference type="Proteomes" id="UP000000750">
    <property type="component" value="Chromosome"/>
</dbReference>
<dbReference type="GO" id="GO:0005829">
    <property type="term" value="C:cytosol"/>
    <property type="evidence" value="ECO:0007669"/>
    <property type="project" value="TreeGrafter"/>
</dbReference>
<dbReference type="GO" id="GO:0043022">
    <property type="term" value="F:ribosome binding"/>
    <property type="evidence" value="ECO:0007669"/>
    <property type="project" value="UniProtKB-UniRule"/>
</dbReference>
<dbReference type="GO" id="GO:0019843">
    <property type="term" value="F:rRNA binding"/>
    <property type="evidence" value="ECO:0007669"/>
    <property type="project" value="UniProtKB-UniRule"/>
</dbReference>
<dbReference type="GO" id="GO:0003743">
    <property type="term" value="F:translation initiation factor activity"/>
    <property type="evidence" value="ECO:0007669"/>
    <property type="project" value="UniProtKB-UniRule"/>
</dbReference>
<dbReference type="CDD" id="cd04451">
    <property type="entry name" value="S1_IF1"/>
    <property type="match status" value="1"/>
</dbReference>
<dbReference type="FunFam" id="2.40.50.140:FF:000002">
    <property type="entry name" value="Translation initiation factor IF-1"/>
    <property type="match status" value="1"/>
</dbReference>
<dbReference type="Gene3D" id="2.40.50.140">
    <property type="entry name" value="Nucleic acid-binding proteins"/>
    <property type="match status" value="1"/>
</dbReference>
<dbReference type="HAMAP" id="MF_00075">
    <property type="entry name" value="IF_1"/>
    <property type="match status" value="1"/>
</dbReference>
<dbReference type="InterPro" id="IPR012340">
    <property type="entry name" value="NA-bd_OB-fold"/>
</dbReference>
<dbReference type="InterPro" id="IPR006196">
    <property type="entry name" value="RNA-binding_domain_S1_IF1"/>
</dbReference>
<dbReference type="InterPro" id="IPR003029">
    <property type="entry name" value="S1_domain"/>
</dbReference>
<dbReference type="InterPro" id="IPR004368">
    <property type="entry name" value="TIF_IF1"/>
</dbReference>
<dbReference type="NCBIfam" id="TIGR00008">
    <property type="entry name" value="infA"/>
    <property type="match status" value="1"/>
</dbReference>
<dbReference type="PANTHER" id="PTHR33370">
    <property type="entry name" value="TRANSLATION INITIATION FACTOR IF-1, CHLOROPLASTIC"/>
    <property type="match status" value="1"/>
</dbReference>
<dbReference type="PANTHER" id="PTHR33370:SF1">
    <property type="entry name" value="TRANSLATION INITIATION FACTOR IF-1, CHLOROPLASTIC"/>
    <property type="match status" value="1"/>
</dbReference>
<dbReference type="Pfam" id="PF01176">
    <property type="entry name" value="eIF-1a"/>
    <property type="match status" value="1"/>
</dbReference>
<dbReference type="SMART" id="SM00316">
    <property type="entry name" value="S1"/>
    <property type="match status" value="1"/>
</dbReference>
<dbReference type="SUPFAM" id="SSF50249">
    <property type="entry name" value="Nucleic acid-binding proteins"/>
    <property type="match status" value="1"/>
</dbReference>
<dbReference type="PROSITE" id="PS50832">
    <property type="entry name" value="S1_IF1_TYPE"/>
    <property type="match status" value="1"/>
</dbReference>
<keyword id="KW-0963">Cytoplasm</keyword>
<keyword id="KW-0396">Initiation factor</keyword>
<keyword id="KW-0648">Protein biosynthesis</keyword>
<keyword id="KW-1185">Reference proteome</keyword>
<keyword id="KW-0694">RNA-binding</keyword>
<keyword id="KW-0699">rRNA-binding</keyword>
<feature type="chain" id="PRO_0000095881" description="Translation initiation factor IF-1">
    <location>
        <begin position="1"/>
        <end position="72"/>
    </location>
</feature>
<feature type="domain" description="S1-like" evidence="1">
    <location>
        <begin position="1"/>
        <end position="72"/>
    </location>
</feature>
<accession>P65123</accession>
<accession>Q491N3</accession>
<accession>Q9A1V3</accession>
<comment type="function">
    <text evidence="1">One of the essential components for the initiation of protein synthesis. Stabilizes the binding of IF-2 and IF-3 on the 30S subunit to which N-formylmethionyl-tRNA(fMet) subsequently binds. Helps modulate mRNA selection, yielding the 30S pre-initiation complex (PIC). Upon addition of the 50S ribosomal subunit IF-1, IF-2 and IF-3 are released leaving the mature 70S translation initiation complex.</text>
</comment>
<comment type="subunit">
    <text evidence="1">Component of the 30S ribosomal translation pre-initiation complex which assembles on the 30S ribosome in the order IF-2 and IF-3, IF-1 and N-formylmethionyl-tRNA(fMet); mRNA recruitment can occur at any time during PIC assembly.</text>
</comment>
<comment type="subcellular location">
    <subcellularLocation>
        <location evidence="1">Cytoplasm</location>
    </subcellularLocation>
</comment>
<comment type="similarity">
    <text evidence="1">Belongs to the IF-1 family.</text>
</comment>
<proteinExistence type="inferred from homology"/>
<reference key="1">
    <citation type="journal article" date="2001" name="Proc. Natl. Acad. Sci. U.S.A.">
        <title>Complete genome sequence of an M1 strain of Streptococcus pyogenes.</title>
        <authorList>
            <person name="Ferretti J.J."/>
            <person name="McShan W.M."/>
            <person name="Ajdic D.J."/>
            <person name="Savic D.J."/>
            <person name="Savic G."/>
            <person name="Lyon K."/>
            <person name="Primeaux C."/>
            <person name="Sezate S."/>
            <person name="Suvorov A.N."/>
            <person name="Kenton S."/>
            <person name="Lai H.S."/>
            <person name="Lin S.P."/>
            <person name="Qian Y."/>
            <person name="Jia H.G."/>
            <person name="Najar F.Z."/>
            <person name="Ren Q."/>
            <person name="Zhu H."/>
            <person name="Song L."/>
            <person name="White J."/>
            <person name="Yuan X."/>
            <person name="Clifton S.W."/>
            <person name="Roe B.A."/>
            <person name="McLaughlin R.E."/>
        </authorList>
    </citation>
    <scope>NUCLEOTIDE SEQUENCE [LARGE SCALE GENOMIC DNA]</scope>
    <source>
        <strain>ATCC 700294 / SF370 / Serotype M1</strain>
    </source>
</reference>
<reference key="2">
    <citation type="journal article" date="2005" name="J. Infect. Dis.">
        <title>Evolutionary origin and emergence of a highly successful clone of serotype M1 group A Streptococcus involved multiple horizontal gene transfer events.</title>
        <authorList>
            <person name="Sumby P."/>
            <person name="Porcella S.F."/>
            <person name="Madrigal A.G."/>
            <person name="Barbian K.D."/>
            <person name="Virtaneva K."/>
            <person name="Ricklefs S.M."/>
            <person name="Sturdevant D.E."/>
            <person name="Graham M.R."/>
            <person name="Vuopio-Varkila J."/>
            <person name="Hoe N.P."/>
            <person name="Musser J.M."/>
        </authorList>
    </citation>
    <scope>NUCLEOTIDE SEQUENCE [LARGE SCALE GENOMIC DNA]</scope>
    <source>
        <strain>ATCC BAA-947 / MGAS5005 / Serotype M1</strain>
    </source>
</reference>
<organism>
    <name type="scientific">Streptococcus pyogenes serotype M1</name>
    <dbReference type="NCBI Taxonomy" id="301447"/>
    <lineage>
        <taxon>Bacteria</taxon>
        <taxon>Bacillati</taxon>
        <taxon>Bacillota</taxon>
        <taxon>Bacilli</taxon>
        <taxon>Lactobacillales</taxon>
        <taxon>Streptococcaceae</taxon>
        <taxon>Streptococcus</taxon>
    </lineage>
</organism>
<protein>
    <recommendedName>
        <fullName evidence="1">Translation initiation factor IF-1</fullName>
    </recommendedName>
</protein>
<gene>
    <name evidence="1" type="primary">infA</name>
    <name type="ordered locus">SPy_0075</name>
    <name type="ordered locus">M5005_Spy0066</name>
</gene>
<name>IF1_STRP1</name>
<evidence type="ECO:0000255" key="1">
    <source>
        <dbReference type="HAMAP-Rule" id="MF_00075"/>
    </source>
</evidence>